<protein>
    <recommendedName>
        <fullName evidence="1">Photosystem II reaction center protein K</fullName>
        <shortName evidence="1">PSII-K</shortName>
    </recommendedName>
</protein>
<proteinExistence type="inferred from homology"/>
<dbReference type="EMBL" id="BX548174">
    <property type="protein sequence ID" value="CAE18731.1"/>
    <property type="molecule type" value="Genomic_DNA"/>
</dbReference>
<dbReference type="RefSeq" id="WP_011131909.1">
    <property type="nucleotide sequence ID" value="NC_005072.1"/>
</dbReference>
<dbReference type="SMR" id="Q7V323"/>
<dbReference type="STRING" id="59919.PMM0272"/>
<dbReference type="KEGG" id="pmm:PMM0272"/>
<dbReference type="eggNOG" id="ENOG5032YQR">
    <property type="taxonomic scope" value="Bacteria"/>
</dbReference>
<dbReference type="HOGENOM" id="CLU_174355_0_0_3"/>
<dbReference type="Proteomes" id="UP000001026">
    <property type="component" value="Chromosome"/>
</dbReference>
<dbReference type="GO" id="GO:0009539">
    <property type="term" value="C:photosystem II reaction center"/>
    <property type="evidence" value="ECO:0007669"/>
    <property type="project" value="InterPro"/>
</dbReference>
<dbReference type="GO" id="GO:0031676">
    <property type="term" value="C:plasma membrane-derived thylakoid membrane"/>
    <property type="evidence" value="ECO:0007669"/>
    <property type="project" value="UniProtKB-SubCell"/>
</dbReference>
<dbReference type="GO" id="GO:0015979">
    <property type="term" value="P:photosynthesis"/>
    <property type="evidence" value="ECO:0007669"/>
    <property type="project" value="UniProtKB-UniRule"/>
</dbReference>
<dbReference type="HAMAP" id="MF_00441">
    <property type="entry name" value="PSII_PsbK"/>
    <property type="match status" value="1"/>
</dbReference>
<dbReference type="InterPro" id="IPR003687">
    <property type="entry name" value="PSII_PsbK"/>
</dbReference>
<dbReference type="InterPro" id="IPR037270">
    <property type="entry name" value="PSII_PsbK_sf"/>
</dbReference>
<dbReference type="NCBIfam" id="NF002715">
    <property type="entry name" value="PRK02553.1"/>
    <property type="match status" value="1"/>
</dbReference>
<dbReference type="PANTHER" id="PTHR35325">
    <property type="match status" value="1"/>
</dbReference>
<dbReference type="PANTHER" id="PTHR35325:SF1">
    <property type="entry name" value="PHOTOSYSTEM II REACTION CENTER PROTEIN K"/>
    <property type="match status" value="1"/>
</dbReference>
<dbReference type="Pfam" id="PF02533">
    <property type="entry name" value="PsbK"/>
    <property type="match status" value="1"/>
</dbReference>
<dbReference type="SUPFAM" id="SSF161037">
    <property type="entry name" value="Photosystem II reaction center protein K, PsbK"/>
    <property type="match status" value="1"/>
</dbReference>
<name>PSBK_PROMP</name>
<sequence>MLTLLNTFAELPEAYKAFAPTVDVLPLIPLFFFLLVFVWQAAVGFK</sequence>
<gene>
    <name evidence="1" type="primary">psbK</name>
    <name type="ordered locus">PMM0272</name>
</gene>
<comment type="function">
    <text evidence="1">One of the components of the core complex of photosystem II (PSII). PSII is a light-driven water:plastoquinone oxidoreductase that uses light energy to abstract electrons from H(2)O, generating O(2) and a proton gradient subsequently used for ATP formation. It consists of a core antenna complex that captures photons, and an electron transfer chain that converts photonic excitation into a charge separation.</text>
</comment>
<comment type="subunit">
    <text evidence="2">PSII is composed of 1 copy each of membrane proteins PsbA, PsbB, PsbC, PsbD, PsbE, PsbF, PsbH, PsbI, PsbJ, PsbK, PsbL, PsbM, PsbT, PsbX, PsbY, Psb30/Ycf12, peripheral proteins PsbO, CyanoQ (PsbQ), PsbU, PsbV and a large number of cofactors. It forms dimeric complexes.</text>
</comment>
<comment type="subcellular location">
    <subcellularLocation>
        <location evidence="1">Cellular thylakoid membrane</location>
        <topology evidence="1">Single-pass membrane protein</topology>
    </subcellularLocation>
</comment>
<comment type="similarity">
    <text evidence="1">Belongs to the PsbK family.</text>
</comment>
<feature type="propeptide" id="PRO_0000029541" evidence="1">
    <location>
        <begin position="1"/>
        <end position="9"/>
    </location>
</feature>
<feature type="chain" id="PRO_0000029542" description="Photosystem II reaction center protein K" evidence="1">
    <location>
        <begin position="10"/>
        <end position="46"/>
    </location>
</feature>
<feature type="transmembrane region" description="Helical" evidence="1">
    <location>
        <begin position="25"/>
        <end position="45"/>
    </location>
</feature>
<evidence type="ECO:0000255" key="1">
    <source>
        <dbReference type="HAMAP-Rule" id="MF_00441"/>
    </source>
</evidence>
<evidence type="ECO:0000305" key="2"/>
<reference key="1">
    <citation type="journal article" date="2003" name="Nature">
        <title>Genome divergence in two Prochlorococcus ecotypes reflects oceanic niche differentiation.</title>
        <authorList>
            <person name="Rocap G."/>
            <person name="Larimer F.W."/>
            <person name="Lamerdin J.E."/>
            <person name="Malfatti S."/>
            <person name="Chain P."/>
            <person name="Ahlgren N.A."/>
            <person name="Arellano A."/>
            <person name="Coleman M."/>
            <person name="Hauser L."/>
            <person name="Hess W.R."/>
            <person name="Johnson Z.I."/>
            <person name="Land M.L."/>
            <person name="Lindell D."/>
            <person name="Post A.F."/>
            <person name="Regala W."/>
            <person name="Shah M."/>
            <person name="Shaw S.L."/>
            <person name="Steglich C."/>
            <person name="Sullivan M.B."/>
            <person name="Ting C.S."/>
            <person name="Tolonen A."/>
            <person name="Webb E.A."/>
            <person name="Zinser E.R."/>
            <person name="Chisholm S.W."/>
        </authorList>
    </citation>
    <scope>NUCLEOTIDE SEQUENCE [LARGE SCALE GENOMIC DNA]</scope>
    <source>
        <strain>CCMP1986 / NIES-2087 / MED4</strain>
    </source>
</reference>
<keyword id="KW-0472">Membrane</keyword>
<keyword id="KW-0602">Photosynthesis</keyword>
<keyword id="KW-0604">Photosystem II</keyword>
<keyword id="KW-0674">Reaction center</keyword>
<keyword id="KW-0793">Thylakoid</keyword>
<keyword id="KW-0812">Transmembrane</keyword>
<keyword id="KW-1133">Transmembrane helix</keyword>
<organism>
    <name type="scientific">Prochlorococcus marinus subsp. pastoris (strain CCMP1986 / NIES-2087 / MED4)</name>
    <dbReference type="NCBI Taxonomy" id="59919"/>
    <lineage>
        <taxon>Bacteria</taxon>
        <taxon>Bacillati</taxon>
        <taxon>Cyanobacteriota</taxon>
        <taxon>Cyanophyceae</taxon>
        <taxon>Synechococcales</taxon>
        <taxon>Prochlorococcaceae</taxon>
        <taxon>Prochlorococcus</taxon>
    </lineage>
</organism>
<accession>Q7V323</accession>